<dbReference type="EC" id="3.1.3.16"/>
<dbReference type="EMBL" id="AK036583">
    <property type="protein sequence ID" value="BAC29490.1"/>
    <property type="molecule type" value="mRNA"/>
</dbReference>
<dbReference type="EMBL" id="AK046962">
    <property type="protein sequence ID" value="BAC32927.1"/>
    <property type="molecule type" value="mRNA"/>
</dbReference>
<dbReference type="EMBL" id="AK053696">
    <property type="protein sequence ID" value="BAC35479.1"/>
    <property type="molecule type" value="mRNA"/>
</dbReference>
<dbReference type="EMBL" id="AL596130">
    <property type="status" value="NOT_ANNOTATED_CDS"/>
    <property type="molecule type" value="Genomic_DNA"/>
</dbReference>
<dbReference type="EMBL" id="AK122434">
    <property type="protein sequence ID" value="BAC65716.1"/>
    <property type="molecule type" value="mRNA"/>
</dbReference>
<dbReference type="CCDS" id="CCDS25211.1"/>
<dbReference type="RefSeq" id="NP_796141.2">
    <property type="nucleotide sequence ID" value="NM_177167.4"/>
</dbReference>
<dbReference type="SMR" id="Q80TL0"/>
<dbReference type="BioGRID" id="236046">
    <property type="interactions" value="3"/>
</dbReference>
<dbReference type="FunCoup" id="Q80TL0">
    <property type="interactions" value="2890"/>
</dbReference>
<dbReference type="IntAct" id="Q80TL0">
    <property type="interactions" value="1"/>
</dbReference>
<dbReference type="STRING" id="10090.ENSMUSP00000061278"/>
<dbReference type="GlyGen" id="Q80TL0">
    <property type="glycosylation" value="1 site, 1 N-linked glycan (1 site)"/>
</dbReference>
<dbReference type="iPTMnet" id="Q80TL0"/>
<dbReference type="PhosphoSitePlus" id="Q80TL0"/>
<dbReference type="SwissPalm" id="Q80TL0"/>
<dbReference type="PaxDb" id="10090-ENSMUSP00000061278"/>
<dbReference type="ProteomicsDB" id="291786"/>
<dbReference type="Pumba" id="Q80TL0"/>
<dbReference type="Antibodypedia" id="18444">
    <property type="antibodies" value="63 antibodies from 15 providers"/>
</dbReference>
<dbReference type="DNASU" id="320472"/>
<dbReference type="Ensembl" id="ENSMUST00000055438.5">
    <property type="protein sequence ID" value="ENSMUSP00000061278.5"/>
    <property type="gene ID" value="ENSMUSG00000046442.5"/>
</dbReference>
<dbReference type="GeneID" id="320472"/>
<dbReference type="KEGG" id="mmu:320472"/>
<dbReference type="UCSC" id="uc007kto.1">
    <property type="organism name" value="mouse"/>
</dbReference>
<dbReference type="AGR" id="MGI:2444096"/>
<dbReference type="CTD" id="22843"/>
<dbReference type="MGI" id="MGI:2444096">
    <property type="gene designation" value="Ppm1e"/>
</dbReference>
<dbReference type="VEuPathDB" id="HostDB:ENSMUSG00000046442"/>
<dbReference type="eggNOG" id="KOG0698">
    <property type="taxonomic scope" value="Eukaryota"/>
</dbReference>
<dbReference type="GeneTree" id="ENSGT00940000157884"/>
<dbReference type="HOGENOM" id="CLU_013173_15_1_1"/>
<dbReference type="InParanoid" id="Q80TL0"/>
<dbReference type="OMA" id="SHLRYHY"/>
<dbReference type="OrthoDB" id="10264738at2759"/>
<dbReference type="PhylomeDB" id="Q80TL0"/>
<dbReference type="TreeFam" id="TF317617"/>
<dbReference type="BioGRID-ORCS" id="320472">
    <property type="hits" value="6 hits in 79 CRISPR screens"/>
</dbReference>
<dbReference type="ChiTaRS" id="Ppm1e">
    <property type="organism name" value="mouse"/>
</dbReference>
<dbReference type="PRO" id="PR:Q80TL0"/>
<dbReference type="Proteomes" id="UP000000589">
    <property type="component" value="Chromosome 11"/>
</dbReference>
<dbReference type="RNAct" id="Q80TL0">
    <property type="molecule type" value="protein"/>
</dbReference>
<dbReference type="Bgee" id="ENSMUSG00000046442">
    <property type="expression patterns" value="Expressed in lateral septal nucleus and 146 other cell types or tissues"/>
</dbReference>
<dbReference type="ExpressionAtlas" id="Q80TL0">
    <property type="expression patterns" value="baseline and differential"/>
</dbReference>
<dbReference type="GO" id="GO:0005737">
    <property type="term" value="C:cytoplasm"/>
    <property type="evidence" value="ECO:0007669"/>
    <property type="project" value="UniProtKB-SubCell"/>
</dbReference>
<dbReference type="GO" id="GO:0005730">
    <property type="term" value="C:nucleolus"/>
    <property type="evidence" value="ECO:0007669"/>
    <property type="project" value="Ensembl"/>
</dbReference>
<dbReference type="GO" id="GO:0005654">
    <property type="term" value="C:nucleoplasm"/>
    <property type="evidence" value="ECO:0007669"/>
    <property type="project" value="Ensembl"/>
</dbReference>
<dbReference type="GO" id="GO:0032991">
    <property type="term" value="C:protein-containing complex"/>
    <property type="evidence" value="ECO:0007669"/>
    <property type="project" value="Ensembl"/>
</dbReference>
<dbReference type="GO" id="GO:0046872">
    <property type="term" value="F:metal ion binding"/>
    <property type="evidence" value="ECO:0007669"/>
    <property type="project" value="UniProtKB-KW"/>
</dbReference>
<dbReference type="GO" id="GO:0004722">
    <property type="term" value="F:protein serine/threonine phosphatase activity"/>
    <property type="evidence" value="ECO:0007669"/>
    <property type="project" value="UniProtKB-EC"/>
</dbReference>
<dbReference type="GO" id="GO:0071222">
    <property type="term" value="P:cellular response to lipopolysaccharide"/>
    <property type="evidence" value="ECO:0007669"/>
    <property type="project" value="Ensembl"/>
</dbReference>
<dbReference type="GO" id="GO:0071466">
    <property type="term" value="P:cellular response to xenobiotic stimulus"/>
    <property type="evidence" value="ECO:0007669"/>
    <property type="project" value="Ensembl"/>
</dbReference>
<dbReference type="GO" id="GO:0051496">
    <property type="term" value="P:positive regulation of stress fiber assembly"/>
    <property type="evidence" value="ECO:0007669"/>
    <property type="project" value="Ensembl"/>
</dbReference>
<dbReference type="GO" id="GO:0006470">
    <property type="term" value="P:protein dephosphorylation"/>
    <property type="evidence" value="ECO:0000315"/>
    <property type="project" value="UniProtKB"/>
</dbReference>
<dbReference type="CDD" id="cd00143">
    <property type="entry name" value="PP2Cc"/>
    <property type="match status" value="1"/>
</dbReference>
<dbReference type="FunFam" id="3.60.40.10:FF:000021">
    <property type="entry name" value="Protein phosphatase, Mg2+/Mn2+-dependent, 1E"/>
    <property type="match status" value="1"/>
</dbReference>
<dbReference type="Gene3D" id="3.60.40.10">
    <property type="entry name" value="PPM-type phosphatase domain"/>
    <property type="match status" value="1"/>
</dbReference>
<dbReference type="InterPro" id="IPR015655">
    <property type="entry name" value="PP2C"/>
</dbReference>
<dbReference type="InterPro" id="IPR000222">
    <property type="entry name" value="PP2C_BS"/>
</dbReference>
<dbReference type="InterPro" id="IPR036457">
    <property type="entry name" value="PPM-type-like_dom_sf"/>
</dbReference>
<dbReference type="InterPro" id="IPR001932">
    <property type="entry name" value="PPM-type_phosphatase-like_dom"/>
</dbReference>
<dbReference type="PANTHER" id="PTHR13832:SF535">
    <property type="entry name" value="PROTEIN PHOSPHATASE 1E"/>
    <property type="match status" value="1"/>
</dbReference>
<dbReference type="PANTHER" id="PTHR13832">
    <property type="entry name" value="PROTEIN PHOSPHATASE 2C"/>
    <property type="match status" value="1"/>
</dbReference>
<dbReference type="Pfam" id="PF00481">
    <property type="entry name" value="PP2C"/>
    <property type="match status" value="1"/>
</dbReference>
<dbReference type="SMART" id="SM00332">
    <property type="entry name" value="PP2Cc"/>
    <property type="match status" value="1"/>
</dbReference>
<dbReference type="SUPFAM" id="SSF81606">
    <property type="entry name" value="PP2C-like"/>
    <property type="match status" value="1"/>
</dbReference>
<dbReference type="PROSITE" id="PS01032">
    <property type="entry name" value="PPM_1"/>
    <property type="match status" value="1"/>
</dbReference>
<dbReference type="PROSITE" id="PS51746">
    <property type="entry name" value="PPM_2"/>
    <property type="match status" value="1"/>
</dbReference>
<reference key="1">
    <citation type="journal article" date="2005" name="Science">
        <title>The transcriptional landscape of the mammalian genome.</title>
        <authorList>
            <person name="Carninci P."/>
            <person name="Kasukawa T."/>
            <person name="Katayama S."/>
            <person name="Gough J."/>
            <person name="Frith M.C."/>
            <person name="Maeda N."/>
            <person name="Oyama R."/>
            <person name="Ravasi T."/>
            <person name="Lenhard B."/>
            <person name="Wells C."/>
            <person name="Kodzius R."/>
            <person name="Shimokawa K."/>
            <person name="Bajic V.B."/>
            <person name="Brenner S.E."/>
            <person name="Batalov S."/>
            <person name="Forrest A.R."/>
            <person name="Zavolan M."/>
            <person name="Davis M.J."/>
            <person name="Wilming L.G."/>
            <person name="Aidinis V."/>
            <person name="Allen J.E."/>
            <person name="Ambesi-Impiombato A."/>
            <person name="Apweiler R."/>
            <person name="Aturaliya R.N."/>
            <person name="Bailey T.L."/>
            <person name="Bansal M."/>
            <person name="Baxter L."/>
            <person name="Beisel K.W."/>
            <person name="Bersano T."/>
            <person name="Bono H."/>
            <person name="Chalk A.M."/>
            <person name="Chiu K.P."/>
            <person name="Choudhary V."/>
            <person name="Christoffels A."/>
            <person name="Clutterbuck D.R."/>
            <person name="Crowe M.L."/>
            <person name="Dalla E."/>
            <person name="Dalrymple B.P."/>
            <person name="de Bono B."/>
            <person name="Della Gatta G."/>
            <person name="di Bernardo D."/>
            <person name="Down T."/>
            <person name="Engstrom P."/>
            <person name="Fagiolini M."/>
            <person name="Faulkner G."/>
            <person name="Fletcher C.F."/>
            <person name="Fukushima T."/>
            <person name="Furuno M."/>
            <person name="Futaki S."/>
            <person name="Gariboldi M."/>
            <person name="Georgii-Hemming P."/>
            <person name="Gingeras T.R."/>
            <person name="Gojobori T."/>
            <person name="Green R.E."/>
            <person name="Gustincich S."/>
            <person name="Harbers M."/>
            <person name="Hayashi Y."/>
            <person name="Hensch T.K."/>
            <person name="Hirokawa N."/>
            <person name="Hill D."/>
            <person name="Huminiecki L."/>
            <person name="Iacono M."/>
            <person name="Ikeo K."/>
            <person name="Iwama A."/>
            <person name="Ishikawa T."/>
            <person name="Jakt M."/>
            <person name="Kanapin A."/>
            <person name="Katoh M."/>
            <person name="Kawasawa Y."/>
            <person name="Kelso J."/>
            <person name="Kitamura H."/>
            <person name="Kitano H."/>
            <person name="Kollias G."/>
            <person name="Krishnan S.P."/>
            <person name="Kruger A."/>
            <person name="Kummerfeld S.K."/>
            <person name="Kurochkin I.V."/>
            <person name="Lareau L.F."/>
            <person name="Lazarevic D."/>
            <person name="Lipovich L."/>
            <person name="Liu J."/>
            <person name="Liuni S."/>
            <person name="McWilliam S."/>
            <person name="Madan Babu M."/>
            <person name="Madera M."/>
            <person name="Marchionni L."/>
            <person name="Matsuda H."/>
            <person name="Matsuzawa S."/>
            <person name="Miki H."/>
            <person name="Mignone F."/>
            <person name="Miyake S."/>
            <person name="Morris K."/>
            <person name="Mottagui-Tabar S."/>
            <person name="Mulder N."/>
            <person name="Nakano N."/>
            <person name="Nakauchi H."/>
            <person name="Ng P."/>
            <person name="Nilsson R."/>
            <person name="Nishiguchi S."/>
            <person name="Nishikawa S."/>
            <person name="Nori F."/>
            <person name="Ohara O."/>
            <person name="Okazaki Y."/>
            <person name="Orlando V."/>
            <person name="Pang K.C."/>
            <person name="Pavan W.J."/>
            <person name="Pavesi G."/>
            <person name="Pesole G."/>
            <person name="Petrovsky N."/>
            <person name="Piazza S."/>
            <person name="Reed J."/>
            <person name="Reid J.F."/>
            <person name="Ring B.Z."/>
            <person name="Ringwald M."/>
            <person name="Rost B."/>
            <person name="Ruan Y."/>
            <person name="Salzberg S.L."/>
            <person name="Sandelin A."/>
            <person name="Schneider C."/>
            <person name="Schoenbach C."/>
            <person name="Sekiguchi K."/>
            <person name="Semple C.A."/>
            <person name="Seno S."/>
            <person name="Sessa L."/>
            <person name="Sheng Y."/>
            <person name="Shibata Y."/>
            <person name="Shimada H."/>
            <person name="Shimada K."/>
            <person name="Silva D."/>
            <person name="Sinclair B."/>
            <person name="Sperling S."/>
            <person name="Stupka E."/>
            <person name="Sugiura K."/>
            <person name="Sultana R."/>
            <person name="Takenaka Y."/>
            <person name="Taki K."/>
            <person name="Tammoja K."/>
            <person name="Tan S.L."/>
            <person name="Tang S."/>
            <person name="Taylor M.S."/>
            <person name="Tegner J."/>
            <person name="Teichmann S.A."/>
            <person name="Ueda H.R."/>
            <person name="van Nimwegen E."/>
            <person name="Verardo R."/>
            <person name="Wei C.L."/>
            <person name="Yagi K."/>
            <person name="Yamanishi H."/>
            <person name="Zabarovsky E."/>
            <person name="Zhu S."/>
            <person name="Zimmer A."/>
            <person name="Hide W."/>
            <person name="Bult C."/>
            <person name="Grimmond S.M."/>
            <person name="Teasdale R.D."/>
            <person name="Liu E.T."/>
            <person name="Brusic V."/>
            <person name="Quackenbush J."/>
            <person name="Wahlestedt C."/>
            <person name="Mattick J.S."/>
            <person name="Hume D.A."/>
            <person name="Kai C."/>
            <person name="Sasaki D."/>
            <person name="Tomaru Y."/>
            <person name="Fukuda S."/>
            <person name="Kanamori-Katayama M."/>
            <person name="Suzuki M."/>
            <person name="Aoki J."/>
            <person name="Arakawa T."/>
            <person name="Iida J."/>
            <person name="Imamura K."/>
            <person name="Itoh M."/>
            <person name="Kato T."/>
            <person name="Kawaji H."/>
            <person name="Kawagashira N."/>
            <person name="Kawashima T."/>
            <person name="Kojima M."/>
            <person name="Kondo S."/>
            <person name="Konno H."/>
            <person name="Nakano K."/>
            <person name="Ninomiya N."/>
            <person name="Nishio T."/>
            <person name="Okada M."/>
            <person name="Plessy C."/>
            <person name="Shibata K."/>
            <person name="Shiraki T."/>
            <person name="Suzuki S."/>
            <person name="Tagami M."/>
            <person name="Waki K."/>
            <person name="Watahiki A."/>
            <person name="Okamura-Oho Y."/>
            <person name="Suzuki H."/>
            <person name="Kawai J."/>
            <person name="Hayashizaki Y."/>
        </authorList>
    </citation>
    <scope>NUCLEOTIDE SEQUENCE [LARGE SCALE MRNA]</scope>
    <source>
        <strain>C57BL/6J</strain>
        <tissue>Bone</tissue>
        <tissue>Cerebellum</tissue>
        <tissue>Eye</tissue>
    </source>
</reference>
<reference key="2">
    <citation type="journal article" date="2009" name="PLoS Biol.">
        <title>Lineage-specific biology revealed by a finished genome assembly of the mouse.</title>
        <authorList>
            <person name="Church D.M."/>
            <person name="Goodstadt L."/>
            <person name="Hillier L.W."/>
            <person name="Zody M.C."/>
            <person name="Goldstein S."/>
            <person name="She X."/>
            <person name="Bult C.J."/>
            <person name="Agarwala R."/>
            <person name="Cherry J.L."/>
            <person name="DiCuccio M."/>
            <person name="Hlavina W."/>
            <person name="Kapustin Y."/>
            <person name="Meric P."/>
            <person name="Maglott D."/>
            <person name="Birtle Z."/>
            <person name="Marques A.C."/>
            <person name="Graves T."/>
            <person name="Zhou S."/>
            <person name="Teague B."/>
            <person name="Potamousis K."/>
            <person name="Churas C."/>
            <person name="Place M."/>
            <person name="Herschleb J."/>
            <person name="Runnheim R."/>
            <person name="Forrest D."/>
            <person name="Amos-Landgraf J."/>
            <person name="Schwartz D.C."/>
            <person name="Cheng Z."/>
            <person name="Lindblad-Toh K."/>
            <person name="Eichler E.E."/>
            <person name="Ponting C.P."/>
        </authorList>
    </citation>
    <scope>NUCLEOTIDE SEQUENCE [LARGE SCALE GENOMIC DNA]</scope>
    <source>
        <strain>C57BL/6J</strain>
    </source>
</reference>
<reference key="3">
    <citation type="journal article" date="2003" name="DNA Res.">
        <title>Prediction of the coding sequences of mouse homologues of KIAA gene: II. The complete nucleotide sequences of 400 mouse KIAA-homologous cDNAs identified by screening of terminal sequences of cDNA clones randomly sampled from size-fractionated libraries.</title>
        <authorList>
            <person name="Okazaki N."/>
            <person name="Kikuno R."/>
            <person name="Ohara R."/>
            <person name="Inamoto S."/>
            <person name="Aizawa H."/>
            <person name="Yuasa S."/>
            <person name="Nakajima D."/>
            <person name="Nagase T."/>
            <person name="Ohara O."/>
            <person name="Koga H."/>
        </authorList>
    </citation>
    <scope>NUCLEOTIDE SEQUENCE [LARGE SCALE MRNA] OF 85-749</scope>
    <source>
        <tissue>Brain</tissue>
    </source>
</reference>
<reference key="4">
    <citation type="submission" date="2009-01" db="UniProtKB">
        <authorList>
            <person name="Lubec G."/>
            <person name="Sunyer B."/>
            <person name="Chen W.-Q."/>
        </authorList>
    </citation>
    <scope>PROTEIN SEQUENCE OF 198-205</scope>
    <scope>IDENTIFICATION BY MASS SPECTROMETRY</scope>
    <source>
        <strain>OF1</strain>
        <tissue>Hippocampus</tissue>
    </source>
</reference>
<reference key="5">
    <citation type="journal article" date="2010" name="Cell">
        <title>A tissue-specific atlas of mouse protein phosphorylation and expression.</title>
        <authorList>
            <person name="Huttlin E.L."/>
            <person name="Jedrychowski M.P."/>
            <person name="Elias J.E."/>
            <person name="Goswami T."/>
            <person name="Rad R."/>
            <person name="Beausoleil S.A."/>
            <person name="Villen J."/>
            <person name="Haas W."/>
            <person name="Sowa M.E."/>
            <person name="Gygi S.P."/>
        </authorList>
    </citation>
    <scope>PHOSPHORYLATION [LARGE SCALE ANALYSIS] AT SER-532</scope>
    <scope>IDENTIFICATION BY MASS SPECTROMETRY [LARGE SCALE ANALYSIS]</scope>
    <source>
        <tissue>Brain</tissue>
        <tissue>Heart</tissue>
        <tissue>Spleen</tissue>
    </source>
</reference>
<reference key="6">
    <citation type="journal article" date="2013" name="Biochem. J.">
        <title>N-Myristoylation is essential for protein phosphatases PPM1A and PPM1B to dephosphorylate their physiological substrates in cells.</title>
        <authorList>
            <person name="Chida T."/>
            <person name="Ando M."/>
            <person name="Matsuki T."/>
            <person name="Masu Y."/>
            <person name="Nagaura Y."/>
            <person name="Takano-Yamamoto T."/>
            <person name="Tamura S."/>
            <person name="Kobayashi T."/>
        </authorList>
    </citation>
    <scope>FUNCTION</scope>
</reference>
<comment type="function">
    <text evidence="1 6">Protein phosphatase that inactivates multifunctional CaM kinases such as CAMK4 and CAMK2. Dephosphorylates and inactivates PAK. May play a role in the inhibition of actin fiber stress breakdown and in morphological changes driven by TNK2/CDC42 (By similarity). Dephosphorylates PRKAA2.</text>
</comment>
<comment type="catalytic activity">
    <reaction>
        <text>O-phospho-L-seryl-[protein] + H2O = L-seryl-[protein] + phosphate</text>
        <dbReference type="Rhea" id="RHEA:20629"/>
        <dbReference type="Rhea" id="RHEA-COMP:9863"/>
        <dbReference type="Rhea" id="RHEA-COMP:11604"/>
        <dbReference type="ChEBI" id="CHEBI:15377"/>
        <dbReference type="ChEBI" id="CHEBI:29999"/>
        <dbReference type="ChEBI" id="CHEBI:43474"/>
        <dbReference type="ChEBI" id="CHEBI:83421"/>
        <dbReference type="EC" id="3.1.3.16"/>
    </reaction>
</comment>
<comment type="catalytic activity">
    <reaction>
        <text>O-phospho-L-threonyl-[protein] + H2O = L-threonyl-[protein] + phosphate</text>
        <dbReference type="Rhea" id="RHEA:47004"/>
        <dbReference type="Rhea" id="RHEA-COMP:11060"/>
        <dbReference type="Rhea" id="RHEA-COMP:11605"/>
        <dbReference type="ChEBI" id="CHEBI:15377"/>
        <dbReference type="ChEBI" id="CHEBI:30013"/>
        <dbReference type="ChEBI" id="CHEBI:43474"/>
        <dbReference type="ChEBI" id="CHEBI:61977"/>
        <dbReference type="EC" id="3.1.3.16"/>
    </reaction>
</comment>
<comment type="cofactor">
    <cofactor evidence="1">
        <name>Mg(2+)</name>
        <dbReference type="ChEBI" id="CHEBI:18420"/>
    </cofactor>
    <cofactor evidence="1">
        <name>Mn(2+)</name>
        <dbReference type="ChEBI" id="CHEBI:29035"/>
    </cofactor>
    <text evidence="1">Binds 2 magnesium or manganese ions per subunit.</text>
</comment>
<comment type="subunit">
    <text evidence="1">Heterotrimer. Interacts with PAX1 and ARHGEF6 (or ARHGEF7) (By similarity).</text>
</comment>
<comment type="subcellular location">
    <subcellularLocation>
        <location evidence="3">Nucleus</location>
    </subcellularLocation>
    <subcellularLocation>
        <location evidence="3">Cytoplasm</location>
    </subcellularLocation>
    <text evidence="3">A truncated form, major form, with the C-terminal part missing, is mostly found in the cytoplasm and a little in the nucleus. The full-length, minor form, is found in the nucleus.</text>
</comment>
<comment type="similarity">
    <text evidence="7">Belongs to the PP2C family.</text>
</comment>
<proteinExistence type="evidence at protein level"/>
<name>PPM1E_MOUSE</name>
<accession>Q80TL0</accession>
<accession>Q5SX30</accession>
<accession>Q8BGM6</accession>
<accession>Q8CB81</accession>
<evidence type="ECO:0000250" key="1"/>
<evidence type="ECO:0000250" key="2">
    <source>
        <dbReference type="UniProtKB" id="Q80Z30"/>
    </source>
</evidence>
<evidence type="ECO:0000250" key="3">
    <source>
        <dbReference type="UniProtKB" id="Q8WY54"/>
    </source>
</evidence>
<evidence type="ECO:0000255" key="4">
    <source>
        <dbReference type="PROSITE-ProRule" id="PRU01082"/>
    </source>
</evidence>
<evidence type="ECO:0000256" key="5">
    <source>
        <dbReference type="SAM" id="MobiDB-lite"/>
    </source>
</evidence>
<evidence type="ECO:0000269" key="6">
    <source>
    </source>
</evidence>
<evidence type="ECO:0000305" key="7"/>
<evidence type="ECO:0007744" key="8">
    <source>
    </source>
</evidence>
<organism>
    <name type="scientific">Mus musculus</name>
    <name type="common">Mouse</name>
    <dbReference type="NCBI Taxonomy" id="10090"/>
    <lineage>
        <taxon>Eukaryota</taxon>
        <taxon>Metazoa</taxon>
        <taxon>Chordata</taxon>
        <taxon>Craniata</taxon>
        <taxon>Vertebrata</taxon>
        <taxon>Euteleostomi</taxon>
        <taxon>Mammalia</taxon>
        <taxon>Eutheria</taxon>
        <taxon>Euarchontoglires</taxon>
        <taxon>Glires</taxon>
        <taxon>Rodentia</taxon>
        <taxon>Myomorpha</taxon>
        <taxon>Muroidea</taxon>
        <taxon>Muridae</taxon>
        <taxon>Murinae</taxon>
        <taxon>Mus</taxon>
        <taxon>Mus</taxon>
    </lineage>
</organism>
<protein>
    <recommendedName>
        <fullName>Protein phosphatase 1E</fullName>
        <ecNumber>3.1.3.16</ecNumber>
    </recommendedName>
    <alternativeName>
        <fullName>Ca(2+)/calmodulin-dependent protein kinase phosphatase N</fullName>
        <shortName>CaMKP-N</shortName>
    </alternativeName>
    <alternativeName>
        <fullName>CaMKP-nucleus</fullName>
        <shortName>CaMKN</shortName>
    </alternativeName>
    <alternativeName>
        <fullName>Partner of PIX 1</fullName>
    </alternativeName>
    <alternativeName>
        <fullName>Partner of PIX-alpha</fullName>
        <shortName>Partner of PIXA</shortName>
    </alternativeName>
</protein>
<feature type="chain" id="PRO_0000286821" description="Protein phosphatase 1E">
    <location>
        <begin position="1"/>
        <end position="749"/>
    </location>
</feature>
<feature type="repeat" description="1">
    <location>
        <begin position="31"/>
        <end position="32"/>
    </location>
</feature>
<feature type="repeat" description="2">
    <location>
        <begin position="33"/>
        <end position="34"/>
    </location>
</feature>
<feature type="repeat" description="3">
    <location>
        <begin position="35"/>
        <end position="36"/>
    </location>
</feature>
<feature type="repeat" description="4; approximate">
    <location>
        <begin position="37"/>
        <end position="38"/>
    </location>
</feature>
<feature type="repeat" description="5">
    <location>
        <begin position="39"/>
        <end position="40"/>
    </location>
</feature>
<feature type="repeat" description="6">
    <location>
        <begin position="41"/>
        <end position="42"/>
    </location>
</feature>
<feature type="repeat" description="7">
    <location>
        <begin position="43"/>
        <end position="44"/>
    </location>
</feature>
<feature type="domain" description="PPM-type phosphatase" evidence="4">
    <location>
        <begin position="224"/>
        <end position="485"/>
    </location>
</feature>
<feature type="region of interest" description="Disordered" evidence="5">
    <location>
        <begin position="21"/>
        <end position="128"/>
    </location>
</feature>
<feature type="region of interest" description="7 X 2 AA tandem repeats of P-E">
    <location>
        <begin position="31"/>
        <end position="44"/>
    </location>
</feature>
<feature type="region of interest" description="Disordered" evidence="5">
    <location>
        <begin position="495"/>
        <end position="537"/>
    </location>
</feature>
<feature type="region of interest" description="Disordered" evidence="5">
    <location>
        <begin position="608"/>
        <end position="627"/>
    </location>
</feature>
<feature type="compositionally biased region" description="Acidic residues" evidence="5">
    <location>
        <begin position="31"/>
        <end position="45"/>
    </location>
</feature>
<feature type="compositionally biased region" description="Low complexity" evidence="5">
    <location>
        <begin position="46"/>
        <end position="55"/>
    </location>
</feature>
<feature type="compositionally biased region" description="Acidic residues" evidence="5">
    <location>
        <begin position="69"/>
        <end position="102"/>
    </location>
</feature>
<feature type="compositionally biased region" description="Pro residues" evidence="5">
    <location>
        <begin position="110"/>
        <end position="126"/>
    </location>
</feature>
<feature type="compositionally biased region" description="Basic and acidic residues" evidence="5">
    <location>
        <begin position="515"/>
        <end position="524"/>
    </location>
</feature>
<feature type="binding site" evidence="1">
    <location>
        <position position="270"/>
    </location>
    <ligand>
        <name>Mn(2+)</name>
        <dbReference type="ChEBI" id="CHEBI:29035"/>
        <label>1</label>
    </ligand>
</feature>
<feature type="binding site" evidence="1">
    <location>
        <position position="270"/>
    </location>
    <ligand>
        <name>Mn(2+)</name>
        <dbReference type="ChEBI" id="CHEBI:29035"/>
        <label>2</label>
    </ligand>
</feature>
<feature type="binding site" evidence="1">
    <location>
        <position position="271"/>
    </location>
    <ligand>
        <name>Mn(2+)</name>
        <dbReference type="ChEBI" id="CHEBI:29035"/>
        <label>1</label>
    </ligand>
</feature>
<feature type="binding site" evidence="1">
    <location>
        <position position="432"/>
    </location>
    <ligand>
        <name>Mn(2+)</name>
        <dbReference type="ChEBI" id="CHEBI:29035"/>
        <label>2</label>
    </ligand>
</feature>
<feature type="binding site" evidence="1">
    <location>
        <position position="476"/>
    </location>
    <ligand>
        <name>Mn(2+)</name>
        <dbReference type="ChEBI" id="CHEBI:29035"/>
        <label>2</label>
    </ligand>
</feature>
<feature type="modified residue" description="Phosphoserine" evidence="8">
    <location>
        <position position="532"/>
    </location>
</feature>
<feature type="modified residue" description="Phosphoserine" evidence="2">
    <location>
        <position position="545"/>
    </location>
</feature>
<feature type="sequence conflict" description="In Ref. 1; BAC29490." evidence="7" ref="1">
    <original>H</original>
    <variation>D</variation>
    <location>
        <position position="107"/>
    </location>
</feature>
<gene>
    <name type="primary">Ppm1e</name>
    <name type="synonym">Camkn</name>
    <name type="synonym">Kiaa1072</name>
</gene>
<sequence length="749" mass="83419">MAGCIPEEKTYRRFLELFLGEFRGPCGGGEPEPEPESEPEPEPEAELVAAEAAEASGEEPGEDAATVEATEEGEQDQDPEPEDEAVEEETATEGEEEEEEEAAAPGHSAVPPPPQPQLPPLPPLPRPLSERITREEVEGESLDLCLQQLYKYNCPSFLAAALARATSDEVLQSDLSAHCIPKETDGTEGTVEIETVKLARSVFSKLHEICCSWVKDFPLRRRPQIYYETSIHAIKNMRRKMEDKHVCIPDFNMLFNLEDQEEQAYFAVFDGHGGVDAAIYASVHLHVNLVRQEMFPHDPAEALCRAFRVTDERFVQKAARESLRCGTTGVVTFIRGNMLHVAWVGDSQVMLVRKGQAVELMKPHKPDREDEKQRIEALGGCVVWFGAWRVNGSLSVSRAIGDAEHKPYICGDADSASTVLDGTEDYLILACDGFYDTVNPDEAVKVVSDHLKENNGDSSMVAHKLVASARDAGSSDNITVIVVFLRDMNKAVNVSEESEWTENSFQGGQEDGGDDKETHGECKRPWPQHQCSAPADLGYEGRVDSFTDRTSLSPGPQINVLEDPDYLDLTQIEASKPHSTQFLPPVEMIGPGAPKKDLNELIMEERSVKSSLPERSGAGEPRVSFNLGSTGQQICRMENLSPVSSGLENEQFKSRGKTASRLYHLRHHYSKRQRGFRFNPKFYSFLSAREPSHKIGISLSSLTRSGKRNKMLRSSLPWRENSWEGYSGNVKIRKRNDIPCPDFPWSYKI</sequence>
<keyword id="KW-0963">Cytoplasm</keyword>
<keyword id="KW-0903">Direct protein sequencing</keyword>
<keyword id="KW-0378">Hydrolase</keyword>
<keyword id="KW-0460">Magnesium</keyword>
<keyword id="KW-0464">Manganese</keyword>
<keyword id="KW-0479">Metal-binding</keyword>
<keyword id="KW-0539">Nucleus</keyword>
<keyword id="KW-0597">Phosphoprotein</keyword>
<keyword id="KW-0904">Protein phosphatase</keyword>
<keyword id="KW-1185">Reference proteome</keyword>
<keyword id="KW-0677">Repeat</keyword>